<feature type="chain" id="PRO_1000195680" description="Large ribosomal subunit protein uL11">
    <location>
        <begin position="1"/>
        <end position="144"/>
    </location>
</feature>
<sequence>MAKKIIGYIKLQIPAGKANPSPPVGPALGQRGLNIMEFCKAFNAATQGMESGLPIPVVITAFADKSFTFVMKTPPASILLKKAAGLQKGSSNPLTNKVGKLTRAQLEEIAKTKEPDLTAADLDAAVRTIAGSARSMGLDVEGVV</sequence>
<comment type="function">
    <text evidence="1">Forms part of the ribosomal stalk which helps the ribosome interact with GTP-bound translation factors.</text>
</comment>
<comment type="subunit">
    <text evidence="1">Part of the ribosomal stalk of the 50S ribosomal subunit. Interacts with L10 and the large rRNA to form the base of the stalk. L10 forms an elongated spine to which L12 dimers bind in a sequential fashion forming a multimeric L10(L12)X complex.</text>
</comment>
<comment type="PTM">
    <text evidence="1">One or more lysine residues are methylated.</text>
</comment>
<comment type="similarity">
    <text evidence="1">Belongs to the universal ribosomal protein uL11 family.</text>
</comment>
<reference key="1">
    <citation type="journal article" date="2008" name="J. Bacteriol.">
        <title>Complete genome sequence of Neisseria gonorrhoeae NCCP11945.</title>
        <authorList>
            <person name="Chung G.T."/>
            <person name="Yoo J.S."/>
            <person name="Oh H.B."/>
            <person name="Lee Y.S."/>
            <person name="Cha S.H."/>
            <person name="Kim S.J."/>
            <person name="Yoo C.K."/>
        </authorList>
    </citation>
    <scope>NUCLEOTIDE SEQUENCE [LARGE SCALE GENOMIC DNA]</scope>
    <source>
        <strain>NCCP11945</strain>
    </source>
</reference>
<protein>
    <recommendedName>
        <fullName evidence="1">Large ribosomal subunit protein uL11</fullName>
    </recommendedName>
    <alternativeName>
        <fullName evidence="2">50S ribosomal protein L11</fullName>
    </alternativeName>
</protein>
<gene>
    <name evidence="1" type="primary">rplK</name>
    <name type="ordered locus">NGK_2416</name>
</gene>
<name>RL11_NEIG2</name>
<organism>
    <name type="scientific">Neisseria gonorrhoeae (strain NCCP11945)</name>
    <dbReference type="NCBI Taxonomy" id="521006"/>
    <lineage>
        <taxon>Bacteria</taxon>
        <taxon>Pseudomonadati</taxon>
        <taxon>Pseudomonadota</taxon>
        <taxon>Betaproteobacteria</taxon>
        <taxon>Neisseriales</taxon>
        <taxon>Neisseriaceae</taxon>
        <taxon>Neisseria</taxon>
    </lineage>
</organism>
<evidence type="ECO:0000255" key="1">
    <source>
        <dbReference type="HAMAP-Rule" id="MF_00736"/>
    </source>
</evidence>
<evidence type="ECO:0000305" key="2"/>
<accession>B4RQV8</accession>
<keyword id="KW-0488">Methylation</keyword>
<keyword id="KW-0687">Ribonucleoprotein</keyword>
<keyword id="KW-0689">Ribosomal protein</keyword>
<keyword id="KW-0694">RNA-binding</keyword>
<keyword id="KW-0699">rRNA-binding</keyword>
<proteinExistence type="inferred from homology"/>
<dbReference type="EMBL" id="CP001050">
    <property type="protein sequence ID" value="ACF31018.1"/>
    <property type="molecule type" value="Genomic_DNA"/>
</dbReference>
<dbReference type="RefSeq" id="WP_003690112.1">
    <property type="nucleotide sequence ID" value="NC_011035.1"/>
</dbReference>
<dbReference type="SMR" id="B4RQV8"/>
<dbReference type="GeneID" id="66754276"/>
<dbReference type="KEGG" id="ngk:NGK_2416"/>
<dbReference type="HOGENOM" id="CLU_074237_2_0_4"/>
<dbReference type="Proteomes" id="UP000002564">
    <property type="component" value="Chromosome"/>
</dbReference>
<dbReference type="GO" id="GO:0022625">
    <property type="term" value="C:cytosolic large ribosomal subunit"/>
    <property type="evidence" value="ECO:0007669"/>
    <property type="project" value="TreeGrafter"/>
</dbReference>
<dbReference type="GO" id="GO:0070180">
    <property type="term" value="F:large ribosomal subunit rRNA binding"/>
    <property type="evidence" value="ECO:0007669"/>
    <property type="project" value="UniProtKB-UniRule"/>
</dbReference>
<dbReference type="GO" id="GO:0003735">
    <property type="term" value="F:structural constituent of ribosome"/>
    <property type="evidence" value="ECO:0007669"/>
    <property type="project" value="InterPro"/>
</dbReference>
<dbReference type="GO" id="GO:0006412">
    <property type="term" value="P:translation"/>
    <property type="evidence" value="ECO:0007669"/>
    <property type="project" value="UniProtKB-UniRule"/>
</dbReference>
<dbReference type="CDD" id="cd00349">
    <property type="entry name" value="Ribosomal_L11"/>
    <property type="match status" value="1"/>
</dbReference>
<dbReference type="FunFam" id="1.10.10.250:FF:000001">
    <property type="entry name" value="50S ribosomal protein L11"/>
    <property type="match status" value="1"/>
</dbReference>
<dbReference type="FunFam" id="3.30.1550.10:FF:000001">
    <property type="entry name" value="50S ribosomal protein L11"/>
    <property type="match status" value="1"/>
</dbReference>
<dbReference type="Gene3D" id="1.10.10.250">
    <property type="entry name" value="Ribosomal protein L11, C-terminal domain"/>
    <property type="match status" value="1"/>
</dbReference>
<dbReference type="Gene3D" id="3.30.1550.10">
    <property type="entry name" value="Ribosomal protein L11/L12, N-terminal domain"/>
    <property type="match status" value="1"/>
</dbReference>
<dbReference type="HAMAP" id="MF_00736">
    <property type="entry name" value="Ribosomal_uL11"/>
    <property type="match status" value="1"/>
</dbReference>
<dbReference type="InterPro" id="IPR000911">
    <property type="entry name" value="Ribosomal_uL11"/>
</dbReference>
<dbReference type="InterPro" id="IPR006519">
    <property type="entry name" value="Ribosomal_uL11_bac-typ"/>
</dbReference>
<dbReference type="InterPro" id="IPR020783">
    <property type="entry name" value="Ribosomal_uL11_C"/>
</dbReference>
<dbReference type="InterPro" id="IPR036769">
    <property type="entry name" value="Ribosomal_uL11_C_sf"/>
</dbReference>
<dbReference type="InterPro" id="IPR020785">
    <property type="entry name" value="Ribosomal_uL11_CS"/>
</dbReference>
<dbReference type="InterPro" id="IPR020784">
    <property type="entry name" value="Ribosomal_uL11_N"/>
</dbReference>
<dbReference type="InterPro" id="IPR036796">
    <property type="entry name" value="Ribosomal_uL11_N_sf"/>
</dbReference>
<dbReference type="NCBIfam" id="TIGR01632">
    <property type="entry name" value="L11_bact"/>
    <property type="match status" value="1"/>
</dbReference>
<dbReference type="PANTHER" id="PTHR11661">
    <property type="entry name" value="60S RIBOSOMAL PROTEIN L12"/>
    <property type="match status" value="1"/>
</dbReference>
<dbReference type="PANTHER" id="PTHR11661:SF1">
    <property type="entry name" value="LARGE RIBOSOMAL SUBUNIT PROTEIN UL11M"/>
    <property type="match status" value="1"/>
</dbReference>
<dbReference type="Pfam" id="PF00298">
    <property type="entry name" value="Ribosomal_L11"/>
    <property type="match status" value="1"/>
</dbReference>
<dbReference type="Pfam" id="PF03946">
    <property type="entry name" value="Ribosomal_L11_N"/>
    <property type="match status" value="1"/>
</dbReference>
<dbReference type="SMART" id="SM00649">
    <property type="entry name" value="RL11"/>
    <property type="match status" value="1"/>
</dbReference>
<dbReference type="SUPFAM" id="SSF54747">
    <property type="entry name" value="Ribosomal L11/L12e N-terminal domain"/>
    <property type="match status" value="1"/>
</dbReference>
<dbReference type="SUPFAM" id="SSF46906">
    <property type="entry name" value="Ribosomal protein L11, C-terminal domain"/>
    <property type="match status" value="1"/>
</dbReference>
<dbReference type="PROSITE" id="PS00359">
    <property type="entry name" value="RIBOSOMAL_L11"/>
    <property type="match status" value="1"/>
</dbReference>